<protein>
    <recommendedName>
        <fullName evidence="1">Small ribosomal subunit protein bS16</fullName>
    </recommendedName>
    <alternativeName>
        <fullName evidence="2">30S ribosomal protein S16</fullName>
    </alternativeName>
</protein>
<accession>A1U2Y9</accession>
<evidence type="ECO:0000255" key="1">
    <source>
        <dbReference type="HAMAP-Rule" id="MF_00385"/>
    </source>
</evidence>
<evidence type="ECO:0000305" key="2"/>
<feature type="chain" id="PRO_1000049286" description="Small ribosomal subunit protein bS16">
    <location>
        <begin position="1"/>
        <end position="79"/>
    </location>
</feature>
<dbReference type="EMBL" id="CP000514">
    <property type="protein sequence ID" value="ABM19358.1"/>
    <property type="molecule type" value="Genomic_DNA"/>
</dbReference>
<dbReference type="RefSeq" id="WP_011785745.1">
    <property type="nucleotide sequence ID" value="NC_008740.1"/>
</dbReference>
<dbReference type="SMR" id="A1U2Y9"/>
<dbReference type="STRING" id="351348.Maqu_2280"/>
<dbReference type="GeneID" id="31820434"/>
<dbReference type="KEGG" id="maq:Maqu_2280"/>
<dbReference type="eggNOG" id="COG0228">
    <property type="taxonomic scope" value="Bacteria"/>
</dbReference>
<dbReference type="HOGENOM" id="CLU_100590_5_1_6"/>
<dbReference type="OrthoDB" id="9807878at2"/>
<dbReference type="Proteomes" id="UP000000998">
    <property type="component" value="Chromosome"/>
</dbReference>
<dbReference type="GO" id="GO:0005737">
    <property type="term" value="C:cytoplasm"/>
    <property type="evidence" value="ECO:0007669"/>
    <property type="project" value="UniProtKB-ARBA"/>
</dbReference>
<dbReference type="GO" id="GO:0015935">
    <property type="term" value="C:small ribosomal subunit"/>
    <property type="evidence" value="ECO:0007669"/>
    <property type="project" value="TreeGrafter"/>
</dbReference>
<dbReference type="GO" id="GO:0003735">
    <property type="term" value="F:structural constituent of ribosome"/>
    <property type="evidence" value="ECO:0007669"/>
    <property type="project" value="InterPro"/>
</dbReference>
<dbReference type="GO" id="GO:0006412">
    <property type="term" value="P:translation"/>
    <property type="evidence" value="ECO:0007669"/>
    <property type="project" value="UniProtKB-UniRule"/>
</dbReference>
<dbReference type="FunFam" id="3.30.1320.10:FF:000001">
    <property type="entry name" value="30S ribosomal protein S16"/>
    <property type="match status" value="1"/>
</dbReference>
<dbReference type="Gene3D" id="3.30.1320.10">
    <property type="match status" value="1"/>
</dbReference>
<dbReference type="HAMAP" id="MF_00385">
    <property type="entry name" value="Ribosomal_bS16"/>
    <property type="match status" value="1"/>
</dbReference>
<dbReference type="InterPro" id="IPR000307">
    <property type="entry name" value="Ribosomal_bS16"/>
</dbReference>
<dbReference type="InterPro" id="IPR023803">
    <property type="entry name" value="Ribosomal_bS16_dom_sf"/>
</dbReference>
<dbReference type="NCBIfam" id="TIGR00002">
    <property type="entry name" value="S16"/>
    <property type="match status" value="1"/>
</dbReference>
<dbReference type="PANTHER" id="PTHR12919">
    <property type="entry name" value="30S RIBOSOMAL PROTEIN S16"/>
    <property type="match status" value="1"/>
</dbReference>
<dbReference type="PANTHER" id="PTHR12919:SF20">
    <property type="entry name" value="SMALL RIBOSOMAL SUBUNIT PROTEIN BS16M"/>
    <property type="match status" value="1"/>
</dbReference>
<dbReference type="Pfam" id="PF00886">
    <property type="entry name" value="Ribosomal_S16"/>
    <property type="match status" value="1"/>
</dbReference>
<dbReference type="SUPFAM" id="SSF54565">
    <property type="entry name" value="Ribosomal protein S16"/>
    <property type="match status" value="1"/>
</dbReference>
<gene>
    <name evidence="1" type="primary">rpsP</name>
    <name type="ordered locus">Maqu_2280</name>
</gene>
<reference key="1">
    <citation type="journal article" date="2011" name="Appl. Environ. Microbiol.">
        <title>Genomic potential of Marinobacter aquaeolei, a biogeochemical 'opportunitroph'.</title>
        <authorList>
            <person name="Singer E."/>
            <person name="Webb E.A."/>
            <person name="Nelson W.C."/>
            <person name="Heidelberg J.F."/>
            <person name="Ivanova N."/>
            <person name="Pati A."/>
            <person name="Edwards K.J."/>
        </authorList>
    </citation>
    <scope>NUCLEOTIDE SEQUENCE [LARGE SCALE GENOMIC DNA]</scope>
    <source>
        <strain>ATCC 700491 / DSM 11845 / VT8</strain>
    </source>
</reference>
<name>RS16_MARN8</name>
<keyword id="KW-0687">Ribonucleoprotein</keyword>
<keyword id="KW-0689">Ribosomal protein</keyword>
<organism>
    <name type="scientific">Marinobacter nauticus (strain ATCC 700491 / DSM 11845 / VT8)</name>
    <name type="common">Marinobacter aquaeolei</name>
    <dbReference type="NCBI Taxonomy" id="351348"/>
    <lineage>
        <taxon>Bacteria</taxon>
        <taxon>Pseudomonadati</taxon>
        <taxon>Pseudomonadota</taxon>
        <taxon>Gammaproteobacteria</taxon>
        <taxon>Pseudomonadales</taxon>
        <taxon>Marinobacteraceae</taxon>
        <taxon>Marinobacter</taxon>
    </lineage>
</organism>
<comment type="similarity">
    <text evidence="1">Belongs to the bacterial ribosomal protein bS16 family.</text>
</comment>
<sequence length="79" mass="9116">MVTIRLARGGSKKRPFYHLTVTDSRNSRDGRFIERVGFFNPIARGQEERLRVNRERVDFWLGQGAQASERVAQLLKAAQ</sequence>
<proteinExistence type="inferred from homology"/>